<organism>
    <name type="scientific">Streptococcus pyogenes serotype M3 (strain SSI-1)</name>
    <dbReference type="NCBI Taxonomy" id="193567"/>
    <lineage>
        <taxon>Bacteria</taxon>
        <taxon>Bacillati</taxon>
        <taxon>Bacillota</taxon>
        <taxon>Bacilli</taxon>
        <taxon>Lactobacillales</taxon>
        <taxon>Streptococcaceae</taxon>
        <taxon>Streptococcus</taxon>
    </lineage>
</organism>
<reference key="1">
    <citation type="journal article" date="2003" name="Genome Res.">
        <title>Genome sequence of an M3 strain of Streptococcus pyogenes reveals a large-scale genomic rearrangement in invasive strains and new insights into phage evolution.</title>
        <authorList>
            <person name="Nakagawa I."/>
            <person name="Kurokawa K."/>
            <person name="Yamashita A."/>
            <person name="Nakata M."/>
            <person name="Tomiyasu Y."/>
            <person name="Okahashi N."/>
            <person name="Kawabata S."/>
            <person name="Yamazaki K."/>
            <person name="Shiba T."/>
            <person name="Yasunaga T."/>
            <person name="Hayashi H."/>
            <person name="Hattori M."/>
            <person name="Hamada S."/>
        </authorList>
    </citation>
    <scope>NUCLEOTIDE SEQUENCE [LARGE SCALE GENOMIC DNA]</scope>
    <source>
        <strain>SSI-1</strain>
    </source>
</reference>
<gene>
    <name evidence="2" type="primary">pgk</name>
    <name type="ordered locus">SPs0243</name>
</gene>
<evidence type="ECO:0000250" key="1"/>
<evidence type="ECO:0000255" key="2">
    <source>
        <dbReference type="HAMAP-Rule" id="MF_00145"/>
    </source>
</evidence>
<feature type="initiator methionine" description="Removed" evidence="1">
    <location>
        <position position="1"/>
    </location>
</feature>
<feature type="chain" id="PRO_0000411440" description="Phosphoglycerate kinase">
    <location>
        <begin position="2"/>
        <end position="398"/>
    </location>
</feature>
<feature type="binding site" evidence="2">
    <location>
        <begin position="21"/>
        <end position="23"/>
    </location>
    <ligand>
        <name>substrate</name>
    </ligand>
</feature>
<feature type="binding site" evidence="2">
    <location>
        <position position="36"/>
    </location>
    <ligand>
        <name>substrate</name>
    </ligand>
</feature>
<feature type="binding site" evidence="2">
    <location>
        <begin position="59"/>
        <end position="62"/>
    </location>
    <ligand>
        <name>substrate</name>
    </ligand>
</feature>
<feature type="binding site" evidence="2">
    <location>
        <position position="119"/>
    </location>
    <ligand>
        <name>substrate</name>
    </ligand>
</feature>
<feature type="binding site" evidence="2">
    <location>
        <position position="157"/>
    </location>
    <ligand>
        <name>substrate</name>
    </ligand>
</feature>
<feature type="binding site" evidence="2">
    <location>
        <position position="208"/>
    </location>
    <ligand>
        <name>ATP</name>
        <dbReference type="ChEBI" id="CHEBI:30616"/>
    </ligand>
</feature>
<feature type="binding site" evidence="2">
    <location>
        <position position="296"/>
    </location>
    <ligand>
        <name>ATP</name>
        <dbReference type="ChEBI" id="CHEBI:30616"/>
    </ligand>
</feature>
<feature type="binding site" evidence="2">
    <location>
        <position position="327"/>
    </location>
    <ligand>
        <name>ATP</name>
        <dbReference type="ChEBI" id="CHEBI:30616"/>
    </ligand>
</feature>
<feature type="binding site" evidence="2">
    <location>
        <begin position="354"/>
        <end position="357"/>
    </location>
    <ligand>
        <name>ATP</name>
        <dbReference type="ChEBI" id="CHEBI:30616"/>
    </ligand>
</feature>
<dbReference type="EC" id="2.7.2.3" evidence="2"/>
<dbReference type="EMBL" id="BA000034">
    <property type="protein sequence ID" value="BAC63338.1"/>
    <property type="molecule type" value="Genomic_DNA"/>
</dbReference>
<dbReference type="RefSeq" id="WP_011054985.1">
    <property type="nucleotide sequence ID" value="NC_004606.1"/>
</dbReference>
<dbReference type="SMR" id="P0DD05"/>
<dbReference type="KEGG" id="sps:SPs0243"/>
<dbReference type="HOGENOM" id="CLU_025427_0_1_9"/>
<dbReference type="UniPathway" id="UPA00109">
    <property type="reaction ID" value="UER00185"/>
</dbReference>
<dbReference type="GO" id="GO:0005829">
    <property type="term" value="C:cytosol"/>
    <property type="evidence" value="ECO:0007669"/>
    <property type="project" value="TreeGrafter"/>
</dbReference>
<dbReference type="GO" id="GO:0043531">
    <property type="term" value="F:ADP binding"/>
    <property type="evidence" value="ECO:0007669"/>
    <property type="project" value="TreeGrafter"/>
</dbReference>
<dbReference type="GO" id="GO:0005524">
    <property type="term" value="F:ATP binding"/>
    <property type="evidence" value="ECO:0007669"/>
    <property type="project" value="UniProtKB-KW"/>
</dbReference>
<dbReference type="GO" id="GO:0004618">
    <property type="term" value="F:phosphoglycerate kinase activity"/>
    <property type="evidence" value="ECO:0007669"/>
    <property type="project" value="UniProtKB-UniRule"/>
</dbReference>
<dbReference type="GO" id="GO:0006094">
    <property type="term" value="P:gluconeogenesis"/>
    <property type="evidence" value="ECO:0007669"/>
    <property type="project" value="TreeGrafter"/>
</dbReference>
<dbReference type="GO" id="GO:0006096">
    <property type="term" value="P:glycolytic process"/>
    <property type="evidence" value="ECO:0007669"/>
    <property type="project" value="UniProtKB-UniRule"/>
</dbReference>
<dbReference type="FunFam" id="3.40.50.1260:FF:000001">
    <property type="entry name" value="Phosphoglycerate kinase"/>
    <property type="match status" value="1"/>
</dbReference>
<dbReference type="FunFam" id="3.40.50.1260:FF:000008">
    <property type="entry name" value="Phosphoglycerate kinase"/>
    <property type="match status" value="1"/>
</dbReference>
<dbReference type="Gene3D" id="3.40.50.1260">
    <property type="entry name" value="Phosphoglycerate kinase, N-terminal domain"/>
    <property type="match status" value="2"/>
</dbReference>
<dbReference type="HAMAP" id="MF_00145">
    <property type="entry name" value="Phosphoglyc_kinase"/>
    <property type="match status" value="1"/>
</dbReference>
<dbReference type="InterPro" id="IPR001576">
    <property type="entry name" value="Phosphoglycerate_kinase"/>
</dbReference>
<dbReference type="InterPro" id="IPR015911">
    <property type="entry name" value="Phosphoglycerate_kinase_CS"/>
</dbReference>
<dbReference type="InterPro" id="IPR015824">
    <property type="entry name" value="Phosphoglycerate_kinase_N"/>
</dbReference>
<dbReference type="InterPro" id="IPR036043">
    <property type="entry name" value="Phosphoglycerate_kinase_sf"/>
</dbReference>
<dbReference type="PANTHER" id="PTHR11406">
    <property type="entry name" value="PHOSPHOGLYCERATE KINASE"/>
    <property type="match status" value="1"/>
</dbReference>
<dbReference type="PANTHER" id="PTHR11406:SF23">
    <property type="entry name" value="PHOSPHOGLYCERATE KINASE 1, CHLOROPLASTIC-RELATED"/>
    <property type="match status" value="1"/>
</dbReference>
<dbReference type="Pfam" id="PF00162">
    <property type="entry name" value="PGK"/>
    <property type="match status" value="1"/>
</dbReference>
<dbReference type="PIRSF" id="PIRSF000724">
    <property type="entry name" value="Pgk"/>
    <property type="match status" value="1"/>
</dbReference>
<dbReference type="PRINTS" id="PR00477">
    <property type="entry name" value="PHGLYCKINASE"/>
</dbReference>
<dbReference type="SUPFAM" id="SSF53748">
    <property type="entry name" value="Phosphoglycerate kinase"/>
    <property type="match status" value="1"/>
</dbReference>
<dbReference type="PROSITE" id="PS00111">
    <property type="entry name" value="PGLYCERATE_KINASE"/>
    <property type="match status" value="1"/>
</dbReference>
<name>PGK_STRPQ</name>
<protein>
    <recommendedName>
        <fullName evidence="2">Phosphoglycerate kinase</fullName>
        <ecNumber evidence="2">2.7.2.3</ecNumber>
    </recommendedName>
</protein>
<sequence>MAKLTVKDVDLKGKKVLVRVDFNVPLKDGVITNDNRITAALPTIKYIIEQGGRAILFSHLGRVKEEADKEGKSLAPVAADLAAKLGQDVVFPGVTRGSKLEEAINALEDGQVLLVENTRFEDVDGKKESKNDEELGKYWASLGDGIFVNDAFGTAHRAHASNVGISANVEKAVAGFLLENEIAYIQEAVETPERPFVAILGGSKVSDKIGVIENLLEKADKVLIGGGMTYTFYKAQGIEIGNSLVEEDKLDVAKDLLEKSNGKLILPVDSKEANAFAGYTEVRDTEGEAVSEGFLGLDIGPKSIAKFDEALTGAKTVVWNGPMGVFENPDFQAGTIGVMDAIVKQPGVKSIIGGGDSAAAAINLGRADKFSWISTGGGASMELLEGKVLPGLAALTEK</sequence>
<comment type="catalytic activity">
    <reaction evidence="2">
        <text>(2R)-3-phosphoglycerate + ATP = (2R)-3-phospho-glyceroyl phosphate + ADP</text>
        <dbReference type="Rhea" id="RHEA:14801"/>
        <dbReference type="ChEBI" id="CHEBI:30616"/>
        <dbReference type="ChEBI" id="CHEBI:57604"/>
        <dbReference type="ChEBI" id="CHEBI:58272"/>
        <dbReference type="ChEBI" id="CHEBI:456216"/>
        <dbReference type="EC" id="2.7.2.3"/>
    </reaction>
</comment>
<comment type="pathway">
    <text evidence="2">Carbohydrate degradation; glycolysis; pyruvate from D-glyceraldehyde 3-phosphate: step 2/5.</text>
</comment>
<comment type="subunit">
    <text evidence="2">Monomer.</text>
</comment>
<comment type="subcellular location">
    <subcellularLocation>
        <location evidence="2">Cytoplasm</location>
    </subcellularLocation>
</comment>
<comment type="similarity">
    <text evidence="2">Belongs to the phosphoglycerate kinase family.</text>
</comment>
<keyword id="KW-0067">ATP-binding</keyword>
<keyword id="KW-0963">Cytoplasm</keyword>
<keyword id="KW-0324">Glycolysis</keyword>
<keyword id="KW-0418">Kinase</keyword>
<keyword id="KW-0547">Nucleotide-binding</keyword>
<keyword id="KW-0808">Transferase</keyword>
<accession>P0DD05</accession>
<accession>Q8K5W7</accession>
<proteinExistence type="inferred from homology"/>